<protein>
    <recommendedName>
        <fullName evidence="1">Elongation factor P</fullName>
        <shortName evidence="1">EF-P</shortName>
    </recommendedName>
</protein>
<proteinExistence type="inferred from homology"/>
<evidence type="ECO:0000255" key="1">
    <source>
        <dbReference type="HAMAP-Rule" id="MF_00141"/>
    </source>
</evidence>
<accession>C1AF02</accession>
<keyword id="KW-0963">Cytoplasm</keyword>
<keyword id="KW-0251">Elongation factor</keyword>
<keyword id="KW-0648">Protein biosynthesis</keyword>
<gene>
    <name evidence="1" type="primary">efp</name>
    <name type="ordered locus">JTY_2550</name>
</gene>
<reference key="1">
    <citation type="journal article" date="2009" name="Vaccine">
        <title>Whole genome sequence analysis of Mycobacterium bovis bacillus Calmette-Guerin (BCG) Tokyo 172: a comparative study of BCG vaccine substrains.</title>
        <authorList>
            <person name="Seki M."/>
            <person name="Honda I."/>
            <person name="Fujita I."/>
            <person name="Yano I."/>
            <person name="Yamamoto S."/>
            <person name="Koyama A."/>
        </authorList>
    </citation>
    <scope>NUCLEOTIDE SEQUENCE [LARGE SCALE GENOMIC DNA]</scope>
    <source>
        <strain>BCG / Tokyo 172 / ATCC 35737 / TMC 1019</strain>
    </source>
</reference>
<name>EFP_MYCBT</name>
<feature type="chain" id="PRO_1000123018" description="Elongation factor P">
    <location>
        <begin position="1"/>
        <end position="187"/>
    </location>
</feature>
<dbReference type="EMBL" id="AP010918">
    <property type="protein sequence ID" value="BAH26831.1"/>
    <property type="molecule type" value="Genomic_DNA"/>
</dbReference>
<dbReference type="RefSeq" id="WP_003412989.1">
    <property type="nucleotide sequence ID" value="NZ_CP014566.1"/>
</dbReference>
<dbReference type="SMR" id="C1AF02"/>
<dbReference type="GeneID" id="45426535"/>
<dbReference type="KEGG" id="mbt:JTY_2550"/>
<dbReference type="HOGENOM" id="CLU_074944_0_1_11"/>
<dbReference type="UniPathway" id="UPA00345"/>
<dbReference type="GO" id="GO:0005737">
    <property type="term" value="C:cytoplasm"/>
    <property type="evidence" value="ECO:0007669"/>
    <property type="project" value="UniProtKB-SubCell"/>
</dbReference>
<dbReference type="GO" id="GO:0003746">
    <property type="term" value="F:translation elongation factor activity"/>
    <property type="evidence" value="ECO:0007669"/>
    <property type="project" value="UniProtKB-UniRule"/>
</dbReference>
<dbReference type="GO" id="GO:0043043">
    <property type="term" value="P:peptide biosynthetic process"/>
    <property type="evidence" value="ECO:0007669"/>
    <property type="project" value="InterPro"/>
</dbReference>
<dbReference type="CDD" id="cd04470">
    <property type="entry name" value="S1_EF-P_repeat_1"/>
    <property type="match status" value="1"/>
</dbReference>
<dbReference type="CDD" id="cd05794">
    <property type="entry name" value="S1_EF-P_repeat_2"/>
    <property type="match status" value="1"/>
</dbReference>
<dbReference type="FunFam" id="2.30.30.30:FF:000003">
    <property type="entry name" value="Elongation factor P"/>
    <property type="match status" value="1"/>
</dbReference>
<dbReference type="FunFam" id="2.40.50.140:FF:000004">
    <property type="entry name" value="Elongation factor P"/>
    <property type="match status" value="1"/>
</dbReference>
<dbReference type="FunFam" id="2.40.50.140:FF:000009">
    <property type="entry name" value="Elongation factor P"/>
    <property type="match status" value="1"/>
</dbReference>
<dbReference type="Gene3D" id="2.30.30.30">
    <property type="match status" value="1"/>
</dbReference>
<dbReference type="Gene3D" id="2.40.50.140">
    <property type="entry name" value="Nucleic acid-binding proteins"/>
    <property type="match status" value="2"/>
</dbReference>
<dbReference type="HAMAP" id="MF_00141">
    <property type="entry name" value="EF_P"/>
    <property type="match status" value="1"/>
</dbReference>
<dbReference type="InterPro" id="IPR015365">
    <property type="entry name" value="Elong-fact-P_C"/>
</dbReference>
<dbReference type="InterPro" id="IPR012340">
    <property type="entry name" value="NA-bd_OB-fold"/>
</dbReference>
<dbReference type="InterPro" id="IPR014722">
    <property type="entry name" value="Rib_uL2_dom2"/>
</dbReference>
<dbReference type="InterPro" id="IPR020599">
    <property type="entry name" value="Transl_elong_fac_P/YeiP"/>
</dbReference>
<dbReference type="InterPro" id="IPR013185">
    <property type="entry name" value="Transl_elong_KOW-like"/>
</dbReference>
<dbReference type="InterPro" id="IPR001059">
    <property type="entry name" value="Transl_elong_P/YeiP_cen"/>
</dbReference>
<dbReference type="InterPro" id="IPR013852">
    <property type="entry name" value="Transl_elong_P/YeiP_CS"/>
</dbReference>
<dbReference type="InterPro" id="IPR011768">
    <property type="entry name" value="Transl_elongation_fac_P"/>
</dbReference>
<dbReference type="InterPro" id="IPR008991">
    <property type="entry name" value="Translation_prot_SH3-like_sf"/>
</dbReference>
<dbReference type="NCBIfam" id="TIGR00038">
    <property type="entry name" value="efp"/>
    <property type="match status" value="1"/>
</dbReference>
<dbReference type="NCBIfam" id="NF001810">
    <property type="entry name" value="PRK00529.1"/>
    <property type="match status" value="1"/>
</dbReference>
<dbReference type="PANTHER" id="PTHR30053">
    <property type="entry name" value="ELONGATION FACTOR P"/>
    <property type="match status" value="1"/>
</dbReference>
<dbReference type="PANTHER" id="PTHR30053:SF12">
    <property type="entry name" value="ELONGATION FACTOR P (EF-P) FAMILY PROTEIN"/>
    <property type="match status" value="1"/>
</dbReference>
<dbReference type="Pfam" id="PF01132">
    <property type="entry name" value="EFP"/>
    <property type="match status" value="1"/>
</dbReference>
<dbReference type="Pfam" id="PF08207">
    <property type="entry name" value="EFP_N"/>
    <property type="match status" value="1"/>
</dbReference>
<dbReference type="Pfam" id="PF09285">
    <property type="entry name" value="Elong-fact-P_C"/>
    <property type="match status" value="1"/>
</dbReference>
<dbReference type="PIRSF" id="PIRSF005901">
    <property type="entry name" value="EF-P"/>
    <property type="match status" value="1"/>
</dbReference>
<dbReference type="SMART" id="SM01185">
    <property type="entry name" value="EFP"/>
    <property type="match status" value="1"/>
</dbReference>
<dbReference type="SMART" id="SM00841">
    <property type="entry name" value="Elong-fact-P_C"/>
    <property type="match status" value="1"/>
</dbReference>
<dbReference type="SUPFAM" id="SSF50249">
    <property type="entry name" value="Nucleic acid-binding proteins"/>
    <property type="match status" value="2"/>
</dbReference>
<dbReference type="SUPFAM" id="SSF50104">
    <property type="entry name" value="Translation proteins SH3-like domain"/>
    <property type="match status" value="1"/>
</dbReference>
<dbReference type="PROSITE" id="PS01275">
    <property type="entry name" value="EFP"/>
    <property type="match status" value="1"/>
</dbReference>
<sequence length="187" mass="20407">MATTADFKNGLVLVIDGQLWTITEFQHVKPGKGPAFVRTKLKNVLSGKVVDKTFNAGVKVDTATVDRRDTTYLYRDGSDFVFMDSQDYEQHPLPEALVGDAARFLLEGMPVQVAFHNGVPLYIELPVTVELEVTHTEPGLQGDRSSAGTKPATLQTGAQINVPLFINTGDKLKVDSRDGSYLGRVNA</sequence>
<organism>
    <name type="scientific">Mycobacterium bovis (strain BCG / Tokyo 172 / ATCC 35737 / TMC 1019)</name>
    <dbReference type="NCBI Taxonomy" id="561275"/>
    <lineage>
        <taxon>Bacteria</taxon>
        <taxon>Bacillati</taxon>
        <taxon>Actinomycetota</taxon>
        <taxon>Actinomycetes</taxon>
        <taxon>Mycobacteriales</taxon>
        <taxon>Mycobacteriaceae</taxon>
        <taxon>Mycobacterium</taxon>
        <taxon>Mycobacterium tuberculosis complex</taxon>
    </lineage>
</organism>
<comment type="function">
    <text evidence="1">Involved in peptide bond synthesis. Stimulates efficient translation and peptide-bond synthesis on native or reconstituted 70S ribosomes in vitro. Probably functions indirectly by altering the affinity of the ribosome for aminoacyl-tRNA, thus increasing their reactivity as acceptors for peptidyl transferase.</text>
</comment>
<comment type="pathway">
    <text evidence="1">Protein biosynthesis; polypeptide chain elongation.</text>
</comment>
<comment type="subcellular location">
    <subcellularLocation>
        <location evidence="1">Cytoplasm</location>
    </subcellularLocation>
</comment>
<comment type="similarity">
    <text evidence="1">Belongs to the elongation factor P family.</text>
</comment>